<feature type="transit peptide" description="Mitochondrion" evidence="3">
    <location>
        <begin position="1"/>
        <end position="48"/>
    </location>
</feature>
<feature type="chain" id="PRO_0000023795" description="Peroxiredoxin-5, mitochondrial">
    <location>
        <begin position="49"/>
        <end position="210"/>
    </location>
</feature>
<feature type="domain" description="Thioredoxin" evidence="4">
    <location>
        <begin position="52"/>
        <end position="210"/>
    </location>
</feature>
<feature type="short sequence motif" description="Microbody targeting signal" evidence="1">
    <location>
        <begin position="208"/>
        <end position="210"/>
    </location>
</feature>
<feature type="active site" description="Cysteine sulfenic acid (-SOH) intermediate" evidence="1">
    <location>
        <position position="96"/>
    </location>
</feature>
<feature type="modified residue" description="N6-acetyllysine; alternate" evidence="10">
    <location>
        <position position="70"/>
    </location>
</feature>
<feature type="modified residue" description="N6-succinyllysine; alternate" evidence="11">
    <location>
        <position position="70"/>
    </location>
</feature>
<feature type="modified residue" description="N6-acetyllysine" evidence="10">
    <location>
        <position position="71"/>
    </location>
</feature>
<feature type="modified residue" description="N6-acetyllysine; alternate" evidence="10">
    <location>
        <position position="79"/>
    </location>
</feature>
<feature type="modified residue" description="N6-succinyllysine; alternate" evidence="11">
    <location>
        <position position="79"/>
    </location>
</feature>
<feature type="modified residue" description="N6-succinyllysine" evidence="11">
    <location>
        <position position="112"/>
    </location>
</feature>
<feature type="modified residue" description="Phosphoserine" evidence="2">
    <location>
        <position position="167"/>
    </location>
</feature>
<feature type="modified residue" description="Phosphoserine" evidence="9">
    <location>
        <position position="178"/>
    </location>
</feature>
<feature type="lipid moiety-binding region" description="S-palmitoyl cysteine" evidence="1">
    <location>
        <position position="96"/>
    </location>
</feature>
<feature type="disulfide bond" description="Redox-active" evidence="4">
    <location>
        <begin position="96"/>
        <end position="200"/>
    </location>
</feature>
<feature type="splice variant" id="VSP_018830" description="In isoform Cytoplasmic+peroxisomal." evidence="7">
    <location>
        <begin position="1"/>
        <end position="48"/>
    </location>
</feature>
<feature type="sequence conflict" description="In Ref. 7; AA sequence." evidence="7" ref="7">
    <original>G</original>
    <variation>D</variation>
    <location>
        <position position="55"/>
    </location>
</feature>
<feature type="sequence conflict" description="In Ref. 4; AAF21016." evidence="7" ref="4">
    <original>GVLFGVPGAFTPGCSKTHLP</original>
    <variation>VFCLESLGHLHLAVLRPTA</variation>
    <location>
        <begin position="83"/>
        <end position="102"/>
    </location>
</feature>
<sequence length="210" mass="21897">MLQLGLRVLGCKASSVLRASTCLAGRAGRKEAGWECGGARSFSSSAVTMAPIKVGDAIPSVEVFEGEPGKKVNLAELFKGKKGVLFGVPGAFTPGCSKTHLPGFVEQAGALKAKGAQVVACLSVNDVFVIEEWGRAHQAEGKVRLLADPTGAFGKATDLLLDDSLVSLFGNRRLKRFSMVIDNGIVKALNVEPDGTGLTCSLAPNILSQL</sequence>
<organism>
    <name type="scientific">Mus musculus</name>
    <name type="common">Mouse</name>
    <dbReference type="NCBI Taxonomy" id="10090"/>
    <lineage>
        <taxon>Eukaryota</taxon>
        <taxon>Metazoa</taxon>
        <taxon>Chordata</taxon>
        <taxon>Craniata</taxon>
        <taxon>Vertebrata</taxon>
        <taxon>Euteleostomi</taxon>
        <taxon>Mammalia</taxon>
        <taxon>Eutheria</taxon>
        <taxon>Euarchontoglires</taxon>
        <taxon>Glires</taxon>
        <taxon>Rodentia</taxon>
        <taxon>Myomorpha</taxon>
        <taxon>Muroidea</taxon>
        <taxon>Muridae</taxon>
        <taxon>Murinae</taxon>
        <taxon>Mus</taxon>
        <taxon>Mus</taxon>
    </lineage>
</organism>
<accession>P99029</accession>
<accession>Q9QX45</accession>
<accession>Q9QZ75</accession>
<proteinExistence type="evidence at protein level"/>
<dbReference type="EC" id="1.11.1.24" evidence="5"/>
<dbReference type="EMBL" id="AF197951">
    <property type="protein sequence ID" value="AAF04855.1"/>
    <property type="molecule type" value="mRNA"/>
</dbReference>
<dbReference type="EMBL" id="AF124994">
    <property type="protein sequence ID" value="AAF27532.1"/>
    <property type="molecule type" value="mRNA"/>
</dbReference>
<dbReference type="EMBL" id="AF110733">
    <property type="protein sequence ID" value="AAG13450.1"/>
    <property type="molecule type" value="mRNA"/>
</dbReference>
<dbReference type="EMBL" id="AF208730">
    <property type="protein sequence ID" value="AAF21016.1"/>
    <property type="molecule type" value="Genomic_DNA"/>
</dbReference>
<dbReference type="EMBL" id="AF208729">
    <property type="protein sequence ID" value="AAF21016.1"/>
    <property type="status" value="JOINED"/>
    <property type="molecule type" value="Genomic_DNA"/>
</dbReference>
<dbReference type="EMBL" id="AK002383">
    <property type="protein sequence ID" value="BAB22058.1"/>
    <property type="molecule type" value="mRNA"/>
</dbReference>
<dbReference type="EMBL" id="AK003332">
    <property type="protein sequence ID" value="BAB22720.1"/>
    <property type="molecule type" value="mRNA"/>
</dbReference>
<dbReference type="EMBL" id="BC008174">
    <property type="protein sequence ID" value="AAH08174.1"/>
    <property type="molecule type" value="mRNA"/>
</dbReference>
<dbReference type="CCDS" id="CCDS29507.1">
    <molecule id="P99029-1"/>
</dbReference>
<dbReference type="PIR" id="JC7239">
    <property type="entry name" value="JC7239"/>
</dbReference>
<dbReference type="RefSeq" id="NP_036151.1">
    <molecule id="P99029-1"/>
    <property type="nucleotide sequence ID" value="NM_012021.3"/>
</dbReference>
<dbReference type="SMR" id="P99029"/>
<dbReference type="BioGRID" id="207718">
    <property type="interactions" value="26"/>
</dbReference>
<dbReference type="FunCoup" id="P99029">
    <property type="interactions" value="2388"/>
</dbReference>
<dbReference type="IntAct" id="P99029">
    <property type="interactions" value="6"/>
</dbReference>
<dbReference type="MINT" id="P99029"/>
<dbReference type="STRING" id="10090.ENSMUSP00000025904"/>
<dbReference type="MoonProt" id="P99029"/>
<dbReference type="PeroxiBase" id="4453">
    <property type="entry name" value="MmPrxV"/>
</dbReference>
<dbReference type="GlyGen" id="P99029">
    <property type="glycosylation" value="3 sites, 1 O-linked glycan (1 site)"/>
</dbReference>
<dbReference type="iPTMnet" id="P99029"/>
<dbReference type="PhosphoSitePlus" id="P99029"/>
<dbReference type="SwissPalm" id="P99029"/>
<dbReference type="REPRODUCTION-2DPAGE" id="P99029"/>
<dbReference type="jPOST" id="P99029"/>
<dbReference type="PaxDb" id="10090-ENSMUSP00000025904"/>
<dbReference type="PeptideAtlas" id="P99029"/>
<dbReference type="ProteomicsDB" id="289893">
    <molecule id="P99029-1"/>
</dbReference>
<dbReference type="ProteomicsDB" id="289894">
    <molecule id="P99029-2"/>
</dbReference>
<dbReference type="Pumba" id="P99029"/>
<dbReference type="Antibodypedia" id="3276">
    <property type="antibodies" value="449 antibodies from 38 providers"/>
</dbReference>
<dbReference type="DNASU" id="54683"/>
<dbReference type="Ensembl" id="ENSMUST00000025904.12">
    <molecule id="P99029-1"/>
    <property type="protein sequence ID" value="ENSMUSP00000025904.6"/>
    <property type="gene ID" value="ENSMUSG00000024953.18"/>
</dbReference>
<dbReference type="GeneID" id="54683"/>
<dbReference type="KEGG" id="mmu:54683"/>
<dbReference type="UCSC" id="uc008gjc.1">
    <molecule id="P99029-1"/>
    <property type="organism name" value="mouse"/>
</dbReference>
<dbReference type="AGR" id="MGI:1859821"/>
<dbReference type="CTD" id="25824"/>
<dbReference type="MGI" id="MGI:1859821">
    <property type="gene designation" value="Prdx5"/>
</dbReference>
<dbReference type="VEuPathDB" id="HostDB:ENSMUSG00000024953"/>
<dbReference type="eggNOG" id="KOG0541">
    <property type="taxonomic scope" value="Eukaryota"/>
</dbReference>
<dbReference type="GeneTree" id="ENSGT00390000018173"/>
<dbReference type="InParanoid" id="P99029"/>
<dbReference type="OMA" id="SAWGKQH"/>
<dbReference type="OrthoDB" id="30900at9989"/>
<dbReference type="PhylomeDB" id="P99029"/>
<dbReference type="TreeFam" id="TF105182"/>
<dbReference type="Reactome" id="R-MMU-3299685">
    <property type="pathway name" value="Detoxification of Reactive Oxygen Species"/>
</dbReference>
<dbReference type="Reactome" id="R-MMU-5628897">
    <property type="pathway name" value="TP53 Regulates Metabolic Genes"/>
</dbReference>
<dbReference type="BioGRID-ORCS" id="54683">
    <property type="hits" value="4 hits in 79 CRISPR screens"/>
</dbReference>
<dbReference type="CD-CODE" id="CE726F99">
    <property type="entry name" value="Postsynaptic density"/>
</dbReference>
<dbReference type="ChiTaRS" id="Prdx5">
    <property type="organism name" value="mouse"/>
</dbReference>
<dbReference type="PRO" id="PR:P99029"/>
<dbReference type="Proteomes" id="UP000000589">
    <property type="component" value="Chromosome 19"/>
</dbReference>
<dbReference type="RNAct" id="P99029">
    <property type="molecule type" value="protein"/>
</dbReference>
<dbReference type="Bgee" id="ENSMUSG00000024953">
    <property type="expression patterns" value="Expressed in granulocyte and 273 other cell types or tissues"/>
</dbReference>
<dbReference type="ExpressionAtlas" id="P99029">
    <property type="expression patterns" value="baseline and differential"/>
</dbReference>
<dbReference type="GO" id="GO:0005737">
    <property type="term" value="C:cytoplasm"/>
    <property type="evidence" value="ECO:0000250"/>
    <property type="project" value="UniProtKB"/>
</dbReference>
<dbReference type="GO" id="GO:0031410">
    <property type="term" value="C:cytoplasmic vesicle"/>
    <property type="evidence" value="ECO:0007669"/>
    <property type="project" value="Ensembl"/>
</dbReference>
<dbReference type="GO" id="GO:0005829">
    <property type="term" value="C:cytosol"/>
    <property type="evidence" value="ECO:0007669"/>
    <property type="project" value="Ensembl"/>
</dbReference>
<dbReference type="GO" id="GO:0005739">
    <property type="term" value="C:mitochondrion"/>
    <property type="evidence" value="ECO:0007005"/>
    <property type="project" value="MGI"/>
</dbReference>
<dbReference type="GO" id="GO:0005634">
    <property type="term" value="C:nucleus"/>
    <property type="evidence" value="ECO:0007669"/>
    <property type="project" value="Ensembl"/>
</dbReference>
<dbReference type="GO" id="GO:0048471">
    <property type="term" value="C:perinuclear region of cytoplasm"/>
    <property type="evidence" value="ECO:0007669"/>
    <property type="project" value="Ensembl"/>
</dbReference>
<dbReference type="GO" id="GO:0005782">
    <property type="term" value="C:peroxisomal matrix"/>
    <property type="evidence" value="ECO:0000250"/>
    <property type="project" value="UniProtKB"/>
</dbReference>
<dbReference type="GO" id="GO:0016209">
    <property type="term" value="F:antioxidant activity"/>
    <property type="evidence" value="ECO:0000250"/>
    <property type="project" value="UniProtKB"/>
</dbReference>
<dbReference type="GO" id="GO:0043027">
    <property type="term" value="F:cysteine-type endopeptidase inhibitor activity involved in apoptotic process"/>
    <property type="evidence" value="ECO:0007669"/>
    <property type="project" value="Ensembl"/>
</dbReference>
<dbReference type="GO" id="GO:0001016">
    <property type="term" value="F:RNA polymerase III transcription regulatory region sequence-specific DNA binding"/>
    <property type="evidence" value="ECO:0007669"/>
    <property type="project" value="Ensembl"/>
</dbReference>
<dbReference type="GO" id="GO:0005102">
    <property type="term" value="F:signaling receptor binding"/>
    <property type="evidence" value="ECO:0000250"/>
    <property type="project" value="UniProtKB"/>
</dbReference>
<dbReference type="GO" id="GO:0008379">
    <property type="term" value="F:thioredoxin peroxidase activity"/>
    <property type="evidence" value="ECO:0007669"/>
    <property type="project" value="InterPro"/>
</dbReference>
<dbReference type="GO" id="GO:0140824">
    <property type="term" value="F:thioredoxin-dependent peroxiredoxin activity"/>
    <property type="evidence" value="ECO:0000314"/>
    <property type="project" value="FlyBase"/>
</dbReference>
<dbReference type="GO" id="GO:0034614">
    <property type="term" value="P:cellular response to reactive oxygen species"/>
    <property type="evidence" value="ECO:0007669"/>
    <property type="project" value="Ensembl"/>
</dbReference>
<dbReference type="GO" id="GO:0042744">
    <property type="term" value="P:hydrogen peroxide catabolic process"/>
    <property type="evidence" value="ECO:0000250"/>
    <property type="project" value="UniProtKB"/>
</dbReference>
<dbReference type="GO" id="GO:0043066">
    <property type="term" value="P:negative regulation of apoptotic process"/>
    <property type="evidence" value="ECO:0007669"/>
    <property type="project" value="Ensembl"/>
</dbReference>
<dbReference type="GO" id="GO:0016480">
    <property type="term" value="P:negative regulation of transcription by RNA polymerase III"/>
    <property type="evidence" value="ECO:0007669"/>
    <property type="project" value="Ensembl"/>
</dbReference>
<dbReference type="GO" id="GO:0006979">
    <property type="term" value="P:response to oxidative stress"/>
    <property type="evidence" value="ECO:0000250"/>
    <property type="project" value="UniProtKB"/>
</dbReference>
<dbReference type="CDD" id="cd03013">
    <property type="entry name" value="PRX5_like"/>
    <property type="match status" value="1"/>
</dbReference>
<dbReference type="FunFam" id="3.40.30.10:FF:000020">
    <property type="entry name" value="Peroxiredoxin"/>
    <property type="match status" value="1"/>
</dbReference>
<dbReference type="Gene3D" id="3.40.30.10">
    <property type="entry name" value="Glutaredoxin"/>
    <property type="match status" value="1"/>
</dbReference>
<dbReference type="InterPro" id="IPR037944">
    <property type="entry name" value="PRX5-like"/>
</dbReference>
<dbReference type="InterPro" id="IPR013740">
    <property type="entry name" value="Redoxin"/>
</dbReference>
<dbReference type="InterPro" id="IPR036249">
    <property type="entry name" value="Thioredoxin-like_sf"/>
</dbReference>
<dbReference type="InterPro" id="IPR013766">
    <property type="entry name" value="Thioredoxin_domain"/>
</dbReference>
<dbReference type="PANTHER" id="PTHR10430">
    <property type="entry name" value="PEROXIREDOXIN"/>
    <property type="match status" value="1"/>
</dbReference>
<dbReference type="PANTHER" id="PTHR10430:SF16">
    <property type="entry name" value="PEROXIREDOXIN-5, MITOCHONDRIAL"/>
    <property type="match status" value="1"/>
</dbReference>
<dbReference type="Pfam" id="PF08534">
    <property type="entry name" value="Redoxin"/>
    <property type="match status" value="1"/>
</dbReference>
<dbReference type="SUPFAM" id="SSF52833">
    <property type="entry name" value="Thioredoxin-like"/>
    <property type="match status" value="1"/>
</dbReference>
<dbReference type="PROSITE" id="PS51352">
    <property type="entry name" value="THIOREDOXIN_2"/>
    <property type="match status" value="1"/>
</dbReference>
<name>PRDX5_MOUSE</name>
<reference key="1">
    <citation type="journal article" date="2000" name="Biochem. Biophys. Res. Commun.">
        <title>Mouse peroxiredoxin V is a thioredoxin peroxidase that inhibits p53-induced apoptosis.</title>
        <authorList>
            <person name="Zhou Y."/>
            <person name="Kok K.H."/>
            <person name="Chun A.C.S."/>
            <person name="Wong C.M."/>
            <person name="Wu H.W."/>
            <person name="Lin M.C.M."/>
            <person name="Fung P.C.W."/>
            <person name="Kung H.-F."/>
            <person name="Jin D.-Y."/>
        </authorList>
    </citation>
    <scope>NUCLEOTIDE SEQUENCE [MRNA]</scope>
    <scope>FUNCTION</scope>
    <scope>CATALYTIC ACTIVITY</scope>
</reference>
<reference key="2">
    <citation type="journal article" date="1999" name="J. Biol. Chem.">
        <title>Characterization of human and murine PMP20 peroxisomal proteins that exhibit antioxidant activity in vitro.</title>
        <authorList>
            <person name="Yamashita H."/>
            <person name="Avraham S."/>
            <person name="Jiang S."/>
            <person name="London R."/>
            <person name="Van Veldhoven P.P."/>
            <person name="Subramani S."/>
            <person name="Rogers R.A."/>
            <person name="Avraham H."/>
        </authorList>
    </citation>
    <scope>NUCLEOTIDE SEQUENCE [MRNA]</scope>
</reference>
<reference key="3">
    <citation type="journal article" date="1999" name="J. Biol. Chem.">
        <title>Cloning and characterization of AOEB166, a novel mammalian antioxidant enzyme of the peroxiredoxin family.</title>
        <authorList>
            <person name="Knoops B."/>
            <person name="Clippe A."/>
            <person name="Bogard C."/>
            <person name="Arsalane K."/>
            <person name="Wattiez R."/>
            <person name="Hermans C."/>
            <person name="Duconseille E."/>
            <person name="Falmagne P."/>
            <person name="Bernard A."/>
        </authorList>
    </citation>
    <scope>NUCLEOTIDE SEQUENCE [MRNA]</scope>
    <source>
        <strain>C3H/HeJ</strain>
        <tissue>Lung</tissue>
    </source>
</reference>
<reference key="4">
    <citation type="journal article" date="2000" name="Biochem. Biophys. Res. Commun.">
        <title>Molecular cloning and characterization of the mouse Peroxiredoxin V gene.</title>
        <authorList>
            <person name="Lee T.H."/>
            <person name="Kim S.J."/>
            <person name="Kang S.W."/>
            <person name="Lee K.K."/>
            <person name="Rhee S.G."/>
            <person name="Yu D.Y."/>
        </authorList>
    </citation>
    <scope>NUCLEOTIDE SEQUENCE [GENOMIC DNA]</scope>
</reference>
<reference key="5">
    <citation type="journal article" date="2005" name="Science">
        <title>The transcriptional landscape of the mammalian genome.</title>
        <authorList>
            <person name="Carninci P."/>
            <person name="Kasukawa T."/>
            <person name="Katayama S."/>
            <person name="Gough J."/>
            <person name="Frith M.C."/>
            <person name="Maeda N."/>
            <person name="Oyama R."/>
            <person name="Ravasi T."/>
            <person name="Lenhard B."/>
            <person name="Wells C."/>
            <person name="Kodzius R."/>
            <person name="Shimokawa K."/>
            <person name="Bajic V.B."/>
            <person name="Brenner S.E."/>
            <person name="Batalov S."/>
            <person name="Forrest A.R."/>
            <person name="Zavolan M."/>
            <person name="Davis M.J."/>
            <person name="Wilming L.G."/>
            <person name="Aidinis V."/>
            <person name="Allen J.E."/>
            <person name="Ambesi-Impiombato A."/>
            <person name="Apweiler R."/>
            <person name="Aturaliya R.N."/>
            <person name="Bailey T.L."/>
            <person name="Bansal M."/>
            <person name="Baxter L."/>
            <person name="Beisel K.W."/>
            <person name="Bersano T."/>
            <person name="Bono H."/>
            <person name="Chalk A.M."/>
            <person name="Chiu K.P."/>
            <person name="Choudhary V."/>
            <person name="Christoffels A."/>
            <person name="Clutterbuck D.R."/>
            <person name="Crowe M.L."/>
            <person name="Dalla E."/>
            <person name="Dalrymple B.P."/>
            <person name="de Bono B."/>
            <person name="Della Gatta G."/>
            <person name="di Bernardo D."/>
            <person name="Down T."/>
            <person name="Engstrom P."/>
            <person name="Fagiolini M."/>
            <person name="Faulkner G."/>
            <person name="Fletcher C.F."/>
            <person name="Fukushima T."/>
            <person name="Furuno M."/>
            <person name="Futaki S."/>
            <person name="Gariboldi M."/>
            <person name="Georgii-Hemming P."/>
            <person name="Gingeras T.R."/>
            <person name="Gojobori T."/>
            <person name="Green R.E."/>
            <person name="Gustincich S."/>
            <person name="Harbers M."/>
            <person name="Hayashi Y."/>
            <person name="Hensch T.K."/>
            <person name="Hirokawa N."/>
            <person name="Hill D."/>
            <person name="Huminiecki L."/>
            <person name="Iacono M."/>
            <person name="Ikeo K."/>
            <person name="Iwama A."/>
            <person name="Ishikawa T."/>
            <person name="Jakt M."/>
            <person name="Kanapin A."/>
            <person name="Katoh M."/>
            <person name="Kawasawa Y."/>
            <person name="Kelso J."/>
            <person name="Kitamura H."/>
            <person name="Kitano H."/>
            <person name="Kollias G."/>
            <person name="Krishnan S.P."/>
            <person name="Kruger A."/>
            <person name="Kummerfeld S.K."/>
            <person name="Kurochkin I.V."/>
            <person name="Lareau L.F."/>
            <person name="Lazarevic D."/>
            <person name="Lipovich L."/>
            <person name="Liu J."/>
            <person name="Liuni S."/>
            <person name="McWilliam S."/>
            <person name="Madan Babu M."/>
            <person name="Madera M."/>
            <person name="Marchionni L."/>
            <person name="Matsuda H."/>
            <person name="Matsuzawa S."/>
            <person name="Miki H."/>
            <person name="Mignone F."/>
            <person name="Miyake S."/>
            <person name="Morris K."/>
            <person name="Mottagui-Tabar S."/>
            <person name="Mulder N."/>
            <person name="Nakano N."/>
            <person name="Nakauchi H."/>
            <person name="Ng P."/>
            <person name="Nilsson R."/>
            <person name="Nishiguchi S."/>
            <person name="Nishikawa S."/>
            <person name="Nori F."/>
            <person name="Ohara O."/>
            <person name="Okazaki Y."/>
            <person name="Orlando V."/>
            <person name="Pang K.C."/>
            <person name="Pavan W.J."/>
            <person name="Pavesi G."/>
            <person name="Pesole G."/>
            <person name="Petrovsky N."/>
            <person name="Piazza S."/>
            <person name="Reed J."/>
            <person name="Reid J.F."/>
            <person name="Ring B.Z."/>
            <person name="Ringwald M."/>
            <person name="Rost B."/>
            <person name="Ruan Y."/>
            <person name="Salzberg S.L."/>
            <person name="Sandelin A."/>
            <person name="Schneider C."/>
            <person name="Schoenbach C."/>
            <person name="Sekiguchi K."/>
            <person name="Semple C.A."/>
            <person name="Seno S."/>
            <person name="Sessa L."/>
            <person name="Sheng Y."/>
            <person name="Shibata Y."/>
            <person name="Shimada H."/>
            <person name="Shimada K."/>
            <person name="Silva D."/>
            <person name="Sinclair B."/>
            <person name="Sperling S."/>
            <person name="Stupka E."/>
            <person name="Sugiura K."/>
            <person name="Sultana R."/>
            <person name="Takenaka Y."/>
            <person name="Taki K."/>
            <person name="Tammoja K."/>
            <person name="Tan S.L."/>
            <person name="Tang S."/>
            <person name="Taylor M.S."/>
            <person name="Tegner J."/>
            <person name="Teichmann S.A."/>
            <person name="Ueda H.R."/>
            <person name="van Nimwegen E."/>
            <person name="Verardo R."/>
            <person name="Wei C.L."/>
            <person name="Yagi K."/>
            <person name="Yamanishi H."/>
            <person name="Zabarovsky E."/>
            <person name="Zhu S."/>
            <person name="Zimmer A."/>
            <person name="Hide W."/>
            <person name="Bult C."/>
            <person name="Grimmond S.M."/>
            <person name="Teasdale R.D."/>
            <person name="Liu E.T."/>
            <person name="Brusic V."/>
            <person name="Quackenbush J."/>
            <person name="Wahlestedt C."/>
            <person name="Mattick J.S."/>
            <person name="Hume D.A."/>
            <person name="Kai C."/>
            <person name="Sasaki D."/>
            <person name="Tomaru Y."/>
            <person name="Fukuda S."/>
            <person name="Kanamori-Katayama M."/>
            <person name="Suzuki M."/>
            <person name="Aoki J."/>
            <person name="Arakawa T."/>
            <person name="Iida J."/>
            <person name="Imamura K."/>
            <person name="Itoh M."/>
            <person name="Kato T."/>
            <person name="Kawaji H."/>
            <person name="Kawagashira N."/>
            <person name="Kawashima T."/>
            <person name="Kojima M."/>
            <person name="Kondo S."/>
            <person name="Konno H."/>
            <person name="Nakano K."/>
            <person name="Ninomiya N."/>
            <person name="Nishio T."/>
            <person name="Okada M."/>
            <person name="Plessy C."/>
            <person name="Shibata K."/>
            <person name="Shiraki T."/>
            <person name="Suzuki S."/>
            <person name="Tagami M."/>
            <person name="Waki K."/>
            <person name="Watahiki A."/>
            <person name="Okamura-Oho Y."/>
            <person name="Suzuki H."/>
            <person name="Kawai J."/>
            <person name="Hayashizaki Y."/>
        </authorList>
    </citation>
    <scope>NUCLEOTIDE SEQUENCE [LARGE SCALE MRNA]</scope>
    <source>
        <strain>C57BL/6J</strain>
        <tissue>Kidney</tissue>
    </source>
</reference>
<reference key="6">
    <citation type="journal article" date="2004" name="Genome Res.">
        <title>The status, quality, and expansion of the NIH full-length cDNA project: the Mammalian Gene Collection (MGC).</title>
        <authorList>
            <consortium name="The MGC Project Team"/>
        </authorList>
    </citation>
    <scope>NUCLEOTIDE SEQUENCE [LARGE SCALE MRNA]</scope>
    <source>
        <tissue>Mammary tumor</tissue>
    </source>
</reference>
<reference key="7">
    <citation type="submission" date="1998-08" db="UniProtKB">
        <authorList>
            <person name="Sanchez J.-C."/>
            <person name="Rouge V."/>
            <person name="Frutiger S."/>
            <person name="Hughes G.J."/>
            <person name="Yan J.X."/>
            <person name="Hoogland C."/>
            <person name="Appel R.D."/>
            <person name="Binz P.-A."/>
            <person name="Hochstrasser D.F."/>
            <person name="Cowthorne M."/>
        </authorList>
    </citation>
    <scope>PROTEIN SEQUENCE OF 50-61</scope>
    <source>
        <tissue>Liver</tissue>
    </source>
</reference>
<reference key="8">
    <citation type="submission" date="2007-04" db="UniProtKB">
        <authorList>
            <person name="Lubec G."/>
            <person name="Klug S."/>
            <person name="Kang S.U."/>
        </authorList>
    </citation>
    <scope>PROTEIN SEQUENCE OF 72-79; 83-112 AND 145-172</scope>
    <scope>IDENTIFICATION BY MASS SPECTROMETRY</scope>
    <source>
        <strain>C57BL/6J</strain>
        <tissue>Brain</tissue>
        <tissue>Hippocampus</tissue>
    </source>
</reference>
<reference key="9">
    <citation type="journal article" date="2010" name="Cell">
        <title>A tissue-specific atlas of mouse protein phosphorylation and expression.</title>
        <authorList>
            <person name="Huttlin E.L."/>
            <person name="Jedrychowski M.P."/>
            <person name="Elias J.E."/>
            <person name="Goswami T."/>
            <person name="Rad R."/>
            <person name="Beausoleil S.A."/>
            <person name="Villen J."/>
            <person name="Haas W."/>
            <person name="Sowa M.E."/>
            <person name="Gygi S.P."/>
        </authorList>
    </citation>
    <scope>PHOSPHORYLATION [LARGE SCALE ANALYSIS] AT SER-178</scope>
    <scope>IDENTIFICATION BY MASS SPECTROMETRY [LARGE SCALE ANALYSIS]</scope>
    <source>
        <tissue>Brain</tissue>
        <tissue>Brown adipose tissue</tissue>
        <tissue>Heart</tissue>
        <tissue>Kidney</tissue>
        <tissue>Liver</tissue>
        <tissue>Lung</tissue>
        <tissue>Pancreas</tissue>
        <tissue>Spleen</tissue>
        <tissue>Testis</tissue>
    </source>
</reference>
<reference key="10">
    <citation type="journal article" date="2013" name="Mol. Cell">
        <title>SIRT5-mediated lysine desuccinylation impacts diverse metabolic pathways.</title>
        <authorList>
            <person name="Park J."/>
            <person name="Chen Y."/>
            <person name="Tishkoff D.X."/>
            <person name="Peng C."/>
            <person name="Tan M."/>
            <person name="Dai L."/>
            <person name="Xie Z."/>
            <person name="Zhang Y."/>
            <person name="Zwaans B.M."/>
            <person name="Skinner M.E."/>
            <person name="Lombard D.B."/>
            <person name="Zhao Y."/>
        </authorList>
    </citation>
    <scope>SUCCINYLATION [LARGE SCALE ANALYSIS] AT LYS-70; LYS-79 AND LYS-112</scope>
    <scope>IDENTIFICATION BY MASS SPECTROMETRY [LARGE SCALE ANALYSIS]</scope>
    <source>
        <tissue>Liver</tissue>
    </source>
</reference>
<reference key="11">
    <citation type="journal article" date="2013" name="Proc. Natl. Acad. Sci. U.S.A.">
        <title>Label-free quantitative proteomics of the lysine acetylome in mitochondria identifies substrates of SIRT3 in metabolic pathways.</title>
        <authorList>
            <person name="Rardin M.J."/>
            <person name="Newman J.C."/>
            <person name="Held J.M."/>
            <person name="Cusack M.P."/>
            <person name="Sorensen D.J."/>
            <person name="Li B."/>
            <person name="Schilling B."/>
            <person name="Mooney S.D."/>
            <person name="Kahn C.R."/>
            <person name="Verdin E."/>
            <person name="Gibson B.W."/>
        </authorList>
    </citation>
    <scope>ACETYLATION [LARGE SCALE ANALYSIS] AT LYS-70; LYS-71 AND LYS-79</scope>
    <scope>IDENTIFICATION BY MASS SPECTROMETRY [LARGE SCALE ANALYSIS]</scope>
    <source>
        <tissue>Liver</tissue>
    </source>
</reference>
<reference key="12">
    <citation type="journal article" date="2019" name="Nat. Chem. Biol.">
        <title>ABHD10 is an S-depalmitoylase affecting redox homeostasis through peroxiredoxin-5.</title>
        <authorList>
            <person name="Cao Y."/>
            <person name="Qiu T."/>
            <person name="Kathayat R.S."/>
            <person name="Azizi S.A."/>
            <person name="Thorne A.K."/>
            <person name="Ahn D."/>
            <person name="Fukata Y."/>
            <person name="Fukata M."/>
            <person name="Rice P.A."/>
            <person name="Dickinson B.C."/>
        </authorList>
    </citation>
    <scope>PALMITOYLATION</scope>
</reference>
<keyword id="KW-0007">Acetylation</keyword>
<keyword id="KW-0024">Alternative initiation</keyword>
<keyword id="KW-0049">Antioxidant</keyword>
<keyword id="KW-0963">Cytoplasm</keyword>
<keyword id="KW-0903">Direct protein sequencing</keyword>
<keyword id="KW-1015">Disulfide bond</keyword>
<keyword id="KW-0449">Lipoprotein</keyword>
<keyword id="KW-0496">Mitochondrion</keyword>
<keyword id="KW-0560">Oxidoreductase</keyword>
<keyword id="KW-0564">Palmitate</keyword>
<keyword id="KW-0575">Peroxidase</keyword>
<keyword id="KW-0576">Peroxisome</keyword>
<keyword id="KW-0597">Phosphoprotein</keyword>
<keyword id="KW-0676">Redox-active center</keyword>
<keyword id="KW-1185">Reference proteome</keyword>
<keyword id="KW-0809">Transit peptide</keyword>
<protein>
    <recommendedName>
        <fullName>Peroxiredoxin-5, mitochondrial</fullName>
        <ecNumber evidence="5">1.11.1.24</ecNumber>
    </recommendedName>
    <alternativeName>
        <fullName>Antioxidant enzyme B166</fullName>
        <shortName>AOEB166</shortName>
    </alternativeName>
    <alternativeName>
        <fullName>Liver tissue 2D-page spot 2D-0014IV</fullName>
    </alternativeName>
    <alternativeName>
        <fullName>PLP</fullName>
    </alternativeName>
    <alternativeName>
        <fullName>Peroxiredoxin V</fullName>
        <shortName>Prx-V</shortName>
    </alternativeName>
    <alternativeName>
        <fullName>Peroxisomal antioxidant enzyme</fullName>
    </alternativeName>
    <alternativeName>
        <fullName>Thioredoxin peroxidase PMP20</fullName>
    </alternativeName>
    <alternativeName>
        <fullName evidence="7">Thioredoxin-dependent peroxiredoxin 5</fullName>
    </alternativeName>
</protein>
<gene>
    <name evidence="8" type="primary">Prdx5</name>
    <name type="synonym">Prdx6</name>
</gene>
<evidence type="ECO:0000250" key="1">
    <source>
        <dbReference type="UniProtKB" id="P30044"/>
    </source>
</evidence>
<evidence type="ECO:0000250" key="2">
    <source>
        <dbReference type="UniProtKB" id="Q9R063"/>
    </source>
</evidence>
<evidence type="ECO:0000255" key="3"/>
<evidence type="ECO:0000255" key="4">
    <source>
        <dbReference type="PROSITE-ProRule" id="PRU00691"/>
    </source>
</evidence>
<evidence type="ECO:0000269" key="5">
    <source>
    </source>
</evidence>
<evidence type="ECO:0000269" key="6">
    <source>
    </source>
</evidence>
<evidence type="ECO:0000305" key="7"/>
<evidence type="ECO:0000312" key="8">
    <source>
        <dbReference type="MGI" id="MGI:1859821"/>
    </source>
</evidence>
<evidence type="ECO:0007744" key="9">
    <source>
    </source>
</evidence>
<evidence type="ECO:0007744" key="10">
    <source>
    </source>
</evidence>
<evidence type="ECO:0007744" key="11">
    <source>
    </source>
</evidence>
<comment type="function">
    <text evidence="5">Thiol-specific peroxidase that catalyzes the reduction of hydrogen peroxide and organic hydroperoxides to water and alcohols, respectively. Plays a role in cell protection against oxidative stress by detoxifying peroxides and as sensor of hydrogen peroxide-mediated signaling events.</text>
</comment>
<comment type="catalytic activity">
    <reaction evidence="5">
        <text>a hydroperoxide + [thioredoxin]-dithiol = an alcohol + [thioredoxin]-disulfide + H2O</text>
        <dbReference type="Rhea" id="RHEA:62620"/>
        <dbReference type="Rhea" id="RHEA-COMP:10698"/>
        <dbReference type="Rhea" id="RHEA-COMP:10700"/>
        <dbReference type="ChEBI" id="CHEBI:15377"/>
        <dbReference type="ChEBI" id="CHEBI:29950"/>
        <dbReference type="ChEBI" id="CHEBI:30879"/>
        <dbReference type="ChEBI" id="CHEBI:35924"/>
        <dbReference type="ChEBI" id="CHEBI:50058"/>
        <dbReference type="EC" id="1.11.1.24"/>
    </reaction>
</comment>
<comment type="subunit">
    <text evidence="1">Monomer.</text>
</comment>
<comment type="interaction">
    <interactant intactId="EBI-2735704">
        <id>P99029</id>
    </interactant>
    <interactant intactId="EBI-1635090">
        <id>P08228</id>
        <label>Sod1</label>
    </interactant>
    <organismsDiffer>false</organismsDiffer>
    <experiments>2</experiments>
</comment>
<comment type="subcellular location">
    <molecule>Isoform Mitochondrial</molecule>
    <subcellularLocation>
        <location evidence="1">Mitochondrion</location>
    </subcellularLocation>
</comment>
<comment type="subcellular location">
    <molecule>Isoform Cytoplasmic+peroxisomal</molecule>
    <subcellularLocation>
        <location evidence="1">Cytoplasm</location>
    </subcellularLocation>
    <subcellularLocation>
        <location evidence="1">Peroxisome matrix</location>
    </subcellularLocation>
</comment>
<comment type="alternative products">
    <event type="alternative initiation"/>
    <isoform>
        <id>P99029-1</id>
        <name>Mitochondrial</name>
        <sequence type="displayed"/>
    </isoform>
    <isoform>
        <id>P99029-2</id>
        <name>Cytoplasmic+peroxisomal</name>
        <sequence type="described" ref="VSP_018830"/>
    </isoform>
</comment>
<comment type="tissue specificity">
    <text>Widely expressed.</text>
</comment>
<comment type="PTM">
    <text evidence="6">S-palmitoylated. Palmitoylation occurs on the active site, inhibiting its reactivity; therefore PRDX5 palmitoylation status determines its antioxidant capacity.</text>
</comment>
<comment type="PTM">
    <molecule>Isoform Mitochondrial</molecule>
    <text evidence="1">S-palmitoylated. Depalmitoylated by ABHD10.</text>
</comment>
<comment type="miscellaneous">
    <text evidence="1">The active site is a conserved redox-active cysteine residue, the peroxidatic cysteine (C(P)), which makes the nucleophilic attack on the peroxide substrate. The peroxide oxidizes the C(P)-SH to cysteine sulfenic acid (C(P)-SOH), which then reacts with another cysteine residue, the resolving cysteine (C(R)), to form a disulfide bridge. The disulfide is subsequently reduced by an appropriate electron donor to complete the catalytic cycle. In this atypical 2-Cys Prx, C(R) is present in the same subunit to form an intramolecular disulfide. The disulfide is subsequently reduced by thioredoxin.</text>
</comment>
<comment type="similarity">
    <text evidence="7">Belongs to the peroxiredoxin family. Prx5 subfamily.</text>
</comment>